<sequence>MRTLTESRRRQSGSSGCKKDSESDDDENTICSRAAIKRSVVYYLKNSTLHGLKYIAEESITIPERIFFGLAFVLVVILSVFFISNVYVKWSASPIIISTSAKQKLTSNMPFPAITICNLNQALLSKVDRIGRTSTNFSLLMGLCDQGGDTTISYIGTWKYFKAILVDVAQPCEKMLLYCSFGSREEDCSWLFTSILTDDGLCCNFNALHPSYLIRNYSDDVRLETAHPNTRYELIDWTPEKGYARNLPEFYFPRTSGGTGIRMGLTVVLNASIAEYYCTKSMSVGFKVLVHNPAELPKVSNYGFVVTAGREARIPIEPVYEDALPTIRSIKKSVRRCLFSDENDLAYYRTYSRKNCELECEAKLLLRECSCVLYYLPRIDPLARVCGPNDNQCTDRVQTEIESSLTNLSCENCWPGCFELTYRATLSTASIVSDPRFQAGENLPEYIFHGPYSNASEISILHFYYMTNIFRSTTKSEMFGFTEFLSNTGGLLGLFMGFSIFSVIEIFFYITVRPYCASRTLRQRHKRRLEQLSWLTPIRMPVRRALRRNRGGLLRNPPPPAYSDLQKFRGKLDKPETCKRKLWRTLQVRPVVDRADEELPTYPYLD</sequence>
<comment type="function">
    <text evidence="3 4 5 6">Osmosensitive ion channel that mediates the cellular and behavioral response to water. Plays an essential role in gustatory water reception. Part of a complex that plays a role in tracheal liquid clearance. Probable role in sodium transport.</text>
</comment>
<comment type="subcellular location">
    <subcellularLocation>
        <location evidence="4">Cell membrane</location>
        <topology evidence="4">Multi-pass membrane protein</topology>
    </subcellularLocation>
</comment>
<comment type="tissue specificity">
    <text evidence="3 4">Expressed in water-sensing neurons in taste bristles on the proboscis but not in carbonation-sensing taste peg neurons (at protein level). Expressed in the tracheal system.</text>
</comment>
<comment type="disruption phenotype">
    <text evidence="4 5">Flies do not exhibit any general drinking defects, but do exhibit markedly reduced water-elicited proboscis extension reflex responses. Abolishes water-elicited spiking activity of water gustatory neurons.</text>
</comment>
<comment type="similarity">
    <text evidence="1">Belongs to the amiloride-sensitive sodium channel (TC 1.A.6) family.</text>
</comment>
<comment type="sequence caution" evidence="7">
    <conflict type="miscellaneous discrepancy">
        <sequence resource="EMBL-CDS" id="AAO47378"/>
    </conflict>
    <text>Probable cloning artifact.</text>
</comment>
<accession>Q86LG1</accession>
<accession>Q86LG0</accession>
<accession>Q9VXA6</accession>
<reference evidence="7 9" key="1">
    <citation type="journal article" date="2003" name="Proc. Natl. Acad. Sci. U.S.A.">
        <title>Drosophila DEG/ENaC pickpocket genes are expressed in the tracheal system, where they may be involved in liquid clearance.</title>
        <authorList>
            <person name="Liu L."/>
            <person name="Johnson W.A."/>
            <person name="Welsh M.J."/>
        </authorList>
    </citation>
    <scope>NUCLEOTIDE SEQUENCE [MRNA]</scope>
    <scope>FUNCTION</scope>
    <scope>TISSUE SPECIFICITY</scope>
</reference>
<reference evidence="8" key="2">
    <citation type="journal article" date="2000" name="Science">
        <title>The genome sequence of Drosophila melanogaster.</title>
        <authorList>
            <person name="Adams M.D."/>
            <person name="Celniker S.E."/>
            <person name="Holt R.A."/>
            <person name="Evans C.A."/>
            <person name="Gocayne J.D."/>
            <person name="Amanatides P.G."/>
            <person name="Scherer S.E."/>
            <person name="Li P.W."/>
            <person name="Hoskins R.A."/>
            <person name="Galle R.F."/>
            <person name="George R.A."/>
            <person name="Lewis S.E."/>
            <person name="Richards S."/>
            <person name="Ashburner M."/>
            <person name="Henderson S.N."/>
            <person name="Sutton G.G."/>
            <person name="Wortman J.R."/>
            <person name="Yandell M.D."/>
            <person name="Zhang Q."/>
            <person name="Chen L.X."/>
            <person name="Brandon R.C."/>
            <person name="Rogers Y.-H.C."/>
            <person name="Blazej R.G."/>
            <person name="Champe M."/>
            <person name="Pfeiffer B.D."/>
            <person name="Wan K.H."/>
            <person name="Doyle C."/>
            <person name="Baxter E.G."/>
            <person name="Helt G."/>
            <person name="Nelson C.R."/>
            <person name="Miklos G.L.G."/>
            <person name="Abril J.F."/>
            <person name="Agbayani A."/>
            <person name="An H.-J."/>
            <person name="Andrews-Pfannkoch C."/>
            <person name="Baldwin D."/>
            <person name="Ballew R.M."/>
            <person name="Basu A."/>
            <person name="Baxendale J."/>
            <person name="Bayraktaroglu L."/>
            <person name="Beasley E.M."/>
            <person name="Beeson K.Y."/>
            <person name="Benos P.V."/>
            <person name="Berman B.P."/>
            <person name="Bhandari D."/>
            <person name="Bolshakov S."/>
            <person name="Borkova D."/>
            <person name="Botchan M.R."/>
            <person name="Bouck J."/>
            <person name="Brokstein P."/>
            <person name="Brottier P."/>
            <person name="Burtis K.C."/>
            <person name="Busam D.A."/>
            <person name="Butler H."/>
            <person name="Cadieu E."/>
            <person name="Center A."/>
            <person name="Chandra I."/>
            <person name="Cherry J.M."/>
            <person name="Cawley S."/>
            <person name="Dahlke C."/>
            <person name="Davenport L.B."/>
            <person name="Davies P."/>
            <person name="de Pablos B."/>
            <person name="Delcher A."/>
            <person name="Deng Z."/>
            <person name="Mays A.D."/>
            <person name="Dew I."/>
            <person name="Dietz S.M."/>
            <person name="Dodson K."/>
            <person name="Doup L.E."/>
            <person name="Downes M."/>
            <person name="Dugan-Rocha S."/>
            <person name="Dunkov B.C."/>
            <person name="Dunn P."/>
            <person name="Durbin K.J."/>
            <person name="Evangelista C.C."/>
            <person name="Ferraz C."/>
            <person name="Ferriera S."/>
            <person name="Fleischmann W."/>
            <person name="Fosler C."/>
            <person name="Gabrielian A.E."/>
            <person name="Garg N.S."/>
            <person name="Gelbart W.M."/>
            <person name="Glasser K."/>
            <person name="Glodek A."/>
            <person name="Gong F."/>
            <person name="Gorrell J.H."/>
            <person name="Gu Z."/>
            <person name="Guan P."/>
            <person name="Harris M."/>
            <person name="Harris N.L."/>
            <person name="Harvey D.A."/>
            <person name="Heiman T.J."/>
            <person name="Hernandez J.R."/>
            <person name="Houck J."/>
            <person name="Hostin D."/>
            <person name="Houston K.A."/>
            <person name="Howland T.J."/>
            <person name="Wei M.-H."/>
            <person name="Ibegwam C."/>
            <person name="Jalali M."/>
            <person name="Kalush F."/>
            <person name="Karpen G.H."/>
            <person name="Ke Z."/>
            <person name="Kennison J.A."/>
            <person name="Ketchum K.A."/>
            <person name="Kimmel B.E."/>
            <person name="Kodira C.D."/>
            <person name="Kraft C.L."/>
            <person name="Kravitz S."/>
            <person name="Kulp D."/>
            <person name="Lai Z."/>
            <person name="Lasko P."/>
            <person name="Lei Y."/>
            <person name="Levitsky A.A."/>
            <person name="Li J.H."/>
            <person name="Li Z."/>
            <person name="Liang Y."/>
            <person name="Lin X."/>
            <person name="Liu X."/>
            <person name="Mattei B."/>
            <person name="McIntosh T.C."/>
            <person name="McLeod M.P."/>
            <person name="McPherson D."/>
            <person name="Merkulov G."/>
            <person name="Milshina N.V."/>
            <person name="Mobarry C."/>
            <person name="Morris J."/>
            <person name="Moshrefi A."/>
            <person name="Mount S.M."/>
            <person name="Moy M."/>
            <person name="Murphy B."/>
            <person name="Murphy L."/>
            <person name="Muzny D.M."/>
            <person name="Nelson D.L."/>
            <person name="Nelson D.R."/>
            <person name="Nelson K.A."/>
            <person name="Nixon K."/>
            <person name="Nusskern D.R."/>
            <person name="Pacleb J.M."/>
            <person name="Palazzolo M."/>
            <person name="Pittman G.S."/>
            <person name="Pan S."/>
            <person name="Pollard J."/>
            <person name="Puri V."/>
            <person name="Reese M.G."/>
            <person name="Reinert K."/>
            <person name="Remington K."/>
            <person name="Saunders R.D.C."/>
            <person name="Scheeler F."/>
            <person name="Shen H."/>
            <person name="Shue B.C."/>
            <person name="Siden-Kiamos I."/>
            <person name="Simpson M."/>
            <person name="Skupski M.P."/>
            <person name="Smith T.J."/>
            <person name="Spier E."/>
            <person name="Spradling A.C."/>
            <person name="Stapleton M."/>
            <person name="Strong R."/>
            <person name="Sun E."/>
            <person name="Svirskas R."/>
            <person name="Tector C."/>
            <person name="Turner R."/>
            <person name="Venter E."/>
            <person name="Wang A.H."/>
            <person name="Wang X."/>
            <person name="Wang Z.-Y."/>
            <person name="Wassarman D.A."/>
            <person name="Weinstock G.M."/>
            <person name="Weissenbach J."/>
            <person name="Williams S.M."/>
            <person name="Woodage T."/>
            <person name="Worley K.C."/>
            <person name="Wu D."/>
            <person name="Yang S."/>
            <person name="Yao Q.A."/>
            <person name="Ye J."/>
            <person name="Yeh R.-F."/>
            <person name="Zaveri J.S."/>
            <person name="Zhan M."/>
            <person name="Zhang G."/>
            <person name="Zhao Q."/>
            <person name="Zheng L."/>
            <person name="Zheng X.H."/>
            <person name="Zhong F.N."/>
            <person name="Zhong W."/>
            <person name="Zhou X."/>
            <person name="Zhu S.C."/>
            <person name="Zhu X."/>
            <person name="Smith H.O."/>
            <person name="Gibbs R.A."/>
            <person name="Myers E.W."/>
            <person name="Rubin G.M."/>
            <person name="Venter J.C."/>
        </authorList>
    </citation>
    <scope>NUCLEOTIDE SEQUENCE [LARGE SCALE GENOMIC DNA]</scope>
    <source>
        <strain>Berkeley</strain>
    </source>
</reference>
<reference key="3">
    <citation type="journal article" date="2002" name="Genome Biol.">
        <title>Annotation of the Drosophila melanogaster euchromatic genome: a systematic review.</title>
        <authorList>
            <person name="Misra S."/>
            <person name="Crosby M.A."/>
            <person name="Mungall C.J."/>
            <person name="Matthews B.B."/>
            <person name="Campbell K.S."/>
            <person name="Hradecky P."/>
            <person name="Huang Y."/>
            <person name="Kaminker J.S."/>
            <person name="Millburn G.H."/>
            <person name="Prochnik S.E."/>
            <person name="Smith C.D."/>
            <person name="Tupy J.L."/>
            <person name="Whitfield E.J."/>
            <person name="Bayraktaroglu L."/>
            <person name="Berman B.P."/>
            <person name="Bettencourt B.R."/>
            <person name="Celniker S.E."/>
            <person name="de Grey A.D.N.J."/>
            <person name="Drysdale R.A."/>
            <person name="Harris N.L."/>
            <person name="Richter J."/>
            <person name="Russo S."/>
            <person name="Schroeder A.J."/>
            <person name="Shu S.Q."/>
            <person name="Stapleton M."/>
            <person name="Yamada C."/>
            <person name="Ashburner M."/>
            <person name="Gelbart W.M."/>
            <person name="Rubin G.M."/>
            <person name="Lewis S.E."/>
        </authorList>
    </citation>
    <scope>GENOME REANNOTATION</scope>
    <source>
        <strain>Berkeley</strain>
    </source>
</reference>
<reference evidence="7 10" key="4">
    <citation type="submission" date="2010-03" db="EMBL/GenBank/DDBJ databases">
        <authorList>
            <person name="Carlson J.W."/>
            <person name="Booth B."/>
            <person name="Frise E."/>
            <person name="Park S."/>
            <person name="Wan K.H."/>
            <person name="Yu C."/>
            <person name="Celniker S.E."/>
        </authorList>
    </citation>
    <scope>NUCLEOTIDE SEQUENCE [LARGE SCALE MRNA]</scope>
    <source>
        <strain>Berkeley</strain>
    </source>
</reference>
<reference evidence="7" key="5">
    <citation type="journal article" date="2003" name="Neuron">
        <title>Contribution of Drosophila DEG/ENaC genes to salt taste.</title>
        <authorList>
            <person name="Liu L."/>
            <person name="Leonard A.S."/>
            <person name="Motto D.G."/>
            <person name="Feller M.A."/>
            <person name="Price M.P."/>
            <person name="Johnson W.A."/>
            <person name="Welsh M.J."/>
        </authorList>
    </citation>
    <scope>IDENTIFICATION</scope>
</reference>
<reference evidence="7" key="6">
    <citation type="journal article" date="2010" name="J. Neurosci.">
        <title>The amiloride-sensitive epithelial Na+ channel PPK28 is essential for drosophila gustatory water reception.</title>
        <authorList>
            <person name="Chen Z."/>
            <person name="Wang Q."/>
            <person name="Wang Z."/>
        </authorList>
    </citation>
    <scope>FUNCTION</scope>
    <scope>DISRUPTION PHENOTYPE</scope>
</reference>
<reference evidence="7" key="7">
    <citation type="journal article" date="2010" name="Nature">
        <title>The molecular basis for water taste in Drosophila.</title>
        <authorList>
            <person name="Cameron P."/>
            <person name="Hiroi M."/>
            <person name="Ngai J."/>
            <person name="Scott K."/>
        </authorList>
    </citation>
    <scope>FUNCTION</scope>
    <scope>SUBCELLULAR LOCATION</scope>
    <scope>TISSUE SPECIFICITY</scope>
    <scope>DISRUPTION PHENOTYPE</scope>
</reference>
<organism>
    <name type="scientific">Drosophila melanogaster</name>
    <name type="common">Fruit fly</name>
    <dbReference type="NCBI Taxonomy" id="7227"/>
    <lineage>
        <taxon>Eukaryota</taxon>
        <taxon>Metazoa</taxon>
        <taxon>Ecdysozoa</taxon>
        <taxon>Arthropoda</taxon>
        <taxon>Hexapoda</taxon>
        <taxon>Insecta</taxon>
        <taxon>Pterygota</taxon>
        <taxon>Neoptera</taxon>
        <taxon>Endopterygota</taxon>
        <taxon>Diptera</taxon>
        <taxon>Brachycera</taxon>
        <taxon>Muscomorpha</taxon>
        <taxon>Ephydroidea</taxon>
        <taxon>Drosophilidae</taxon>
        <taxon>Drosophila</taxon>
        <taxon>Sophophora</taxon>
    </lineage>
</organism>
<name>PPK28_DROME</name>
<evidence type="ECO:0000255" key="1"/>
<evidence type="ECO:0000256" key="2">
    <source>
        <dbReference type="SAM" id="MobiDB-lite"/>
    </source>
</evidence>
<evidence type="ECO:0000269" key="3">
    <source>
    </source>
</evidence>
<evidence type="ECO:0000269" key="4">
    <source>
    </source>
</evidence>
<evidence type="ECO:0000269" key="5">
    <source>
    </source>
</evidence>
<evidence type="ECO:0000303" key="6">
    <source>
    </source>
</evidence>
<evidence type="ECO:0000305" key="7"/>
<evidence type="ECO:0000312" key="8">
    <source>
        <dbReference type="EMBL" id="AAF48671.3"/>
    </source>
</evidence>
<evidence type="ECO:0000312" key="9">
    <source>
        <dbReference type="EMBL" id="AAO47378.1"/>
    </source>
</evidence>
<evidence type="ECO:0000312" key="10">
    <source>
        <dbReference type="EMBL" id="ADE06680.1"/>
    </source>
</evidence>
<feature type="chain" id="PRO_0000420433" description="Pickpocket protein 28">
    <location>
        <begin position="1"/>
        <end position="606"/>
    </location>
</feature>
<feature type="transmembrane region" description="Helical" evidence="1">
    <location>
        <begin position="66"/>
        <end position="86"/>
    </location>
</feature>
<feature type="transmembrane region" description="Helical" evidence="1">
    <location>
        <begin position="490"/>
        <end position="510"/>
    </location>
</feature>
<feature type="region of interest" description="Disordered" evidence="2">
    <location>
        <begin position="1"/>
        <end position="26"/>
    </location>
</feature>
<dbReference type="EMBL" id="AY226552">
    <property type="protein sequence ID" value="AAO47378.1"/>
    <property type="status" value="ALT_SEQ"/>
    <property type="molecule type" value="mRNA"/>
</dbReference>
<dbReference type="EMBL" id="AY226553">
    <property type="protein sequence ID" value="AAO47379.1"/>
    <property type="molecule type" value="mRNA"/>
</dbReference>
<dbReference type="EMBL" id="AE014298">
    <property type="protein sequence ID" value="AAF48671.3"/>
    <property type="molecule type" value="Genomic_DNA"/>
</dbReference>
<dbReference type="EMBL" id="BT122074">
    <property type="protein sequence ID" value="ADE06680.1"/>
    <property type="molecule type" value="mRNA"/>
</dbReference>
<dbReference type="RefSeq" id="NP_573169.2">
    <property type="nucleotide sequence ID" value="NM_132941.3"/>
</dbReference>
<dbReference type="BioGRID" id="59002">
    <property type="interactions" value="4"/>
</dbReference>
<dbReference type="FunCoup" id="Q86LG1">
    <property type="interactions" value="18"/>
</dbReference>
<dbReference type="IntAct" id="Q86LG1">
    <property type="interactions" value="1"/>
</dbReference>
<dbReference type="STRING" id="7227.FBpp0074109"/>
<dbReference type="PaxDb" id="7227-FBpp0074109"/>
<dbReference type="DNASU" id="32671"/>
<dbReference type="EnsemblMetazoa" id="FBtr0074335">
    <property type="protein sequence ID" value="FBpp0074109"/>
    <property type="gene ID" value="FBgn0030795"/>
</dbReference>
<dbReference type="GeneID" id="32671"/>
<dbReference type="KEGG" id="dme:Dmel_CG4805"/>
<dbReference type="UCSC" id="CG4805-RA">
    <property type="organism name" value="d. melanogaster"/>
</dbReference>
<dbReference type="UCSC" id="CG4805-RB">
    <property type="organism name" value="d. melanogaster"/>
</dbReference>
<dbReference type="AGR" id="FB:FBgn0030795"/>
<dbReference type="CTD" id="32671"/>
<dbReference type="FlyBase" id="FBgn0030795">
    <property type="gene designation" value="ppk28"/>
</dbReference>
<dbReference type="VEuPathDB" id="VectorBase:FBgn0030795"/>
<dbReference type="eggNOG" id="KOG4294">
    <property type="taxonomic scope" value="Eukaryota"/>
</dbReference>
<dbReference type="GeneTree" id="ENSGT00940000169532"/>
<dbReference type="HOGENOM" id="CLU_024950_1_0_1"/>
<dbReference type="InParanoid" id="Q86LG1"/>
<dbReference type="OMA" id="RVCGPND"/>
<dbReference type="OrthoDB" id="6021021at2759"/>
<dbReference type="PhylomeDB" id="Q86LG1"/>
<dbReference type="Reactome" id="R-DME-2672351">
    <property type="pathway name" value="Stimuli-sensing channels"/>
</dbReference>
<dbReference type="BioGRID-ORCS" id="32671">
    <property type="hits" value="0 hits in 1 CRISPR screen"/>
</dbReference>
<dbReference type="GenomeRNAi" id="32671"/>
<dbReference type="PRO" id="PR:Q86LG1"/>
<dbReference type="Proteomes" id="UP000000803">
    <property type="component" value="Chromosome X"/>
</dbReference>
<dbReference type="Bgee" id="FBgn0030795">
    <property type="expression patterns" value="Expressed in gustatory receptor neuron (Drosophila) and 8 other cell types or tissues"/>
</dbReference>
<dbReference type="GO" id="GO:0016020">
    <property type="term" value="C:membrane"/>
    <property type="evidence" value="ECO:0000250"/>
    <property type="project" value="FlyBase"/>
</dbReference>
<dbReference type="GO" id="GO:0005886">
    <property type="term" value="C:plasma membrane"/>
    <property type="evidence" value="ECO:0000318"/>
    <property type="project" value="GO_Central"/>
</dbReference>
<dbReference type="GO" id="GO:0015280">
    <property type="term" value="F:ligand-gated sodium channel activity"/>
    <property type="evidence" value="ECO:0000318"/>
    <property type="project" value="GO_Central"/>
</dbReference>
<dbReference type="GO" id="GO:0005272">
    <property type="term" value="F:sodium channel activity"/>
    <property type="evidence" value="ECO:0000250"/>
    <property type="project" value="FlyBase"/>
</dbReference>
<dbReference type="GO" id="GO:0071462">
    <property type="term" value="P:cellular response to water stimulus"/>
    <property type="evidence" value="ECO:0000315"/>
    <property type="project" value="FlyBase"/>
</dbReference>
<dbReference type="GO" id="GO:0042756">
    <property type="term" value="P:drinking behavior"/>
    <property type="evidence" value="ECO:0000315"/>
    <property type="project" value="FlyBase"/>
</dbReference>
<dbReference type="GO" id="GO:0035002">
    <property type="term" value="P:liquid clearance, open tracheal system"/>
    <property type="evidence" value="ECO:0000315"/>
    <property type="project" value="UniProtKB"/>
</dbReference>
<dbReference type="GO" id="GO:0009415">
    <property type="term" value="P:response to water"/>
    <property type="evidence" value="ECO:0000314"/>
    <property type="project" value="FlyBase"/>
</dbReference>
<dbReference type="GO" id="GO:0035725">
    <property type="term" value="P:sodium ion transmembrane transport"/>
    <property type="evidence" value="ECO:0000318"/>
    <property type="project" value="GO_Central"/>
</dbReference>
<dbReference type="GO" id="GO:0006814">
    <property type="term" value="P:sodium ion transport"/>
    <property type="evidence" value="ECO:0000250"/>
    <property type="project" value="FlyBase"/>
</dbReference>
<dbReference type="Gene3D" id="2.60.470.10">
    <property type="entry name" value="Acid-sensing ion channels like domains"/>
    <property type="match status" value="1"/>
</dbReference>
<dbReference type="Gene3D" id="1.10.287.770">
    <property type="entry name" value="YojJ-like"/>
    <property type="match status" value="1"/>
</dbReference>
<dbReference type="InterPro" id="IPR001873">
    <property type="entry name" value="ENaC"/>
</dbReference>
<dbReference type="PANTHER" id="PTHR11690">
    <property type="entry name" value="AMILORIDE-SENSITIVE SODIUM CHANNEL-RELATED"/>
    <property type="match status" value="1"/>
</dbReference>
<dbReference type="PANTHER" id="PTHR11690:SF243">
    <property type="entry name" value="PICKPOCKET 12-RELATED"/>
    <property type="match status" value="1"/>
</dbReference>
<dbReference type="Pfam" id="PF00858">
    <property type="entry name" value="ASC"/>
    <property type="match status" value="1"/>
</dbReference>
<dbReference type="PRINTS" id="PR01078">
    <property type="entry name" value="AMINACHANNEL"/>
</dbReference>
<gene>
    <name type="primary">ppk28</name>
    <name type="ORF">CG4805</name>
</gene>
<keyword id="KW-1003">Cell membrane</keyword>
<keyword id="KW-0407">Ion channel</keyword>
<keyword id="KW-0406">Ion transport</keyword>
<keyword id="KW-0472">Membrane</keyword>
<keyword id="KW-1185">Reference proteome</keyword>
<keyword id="KW-0915">Sodium</keyword>
<keyword id="KW-0894">Sodium channel</keyword>
<keyword id="KW-0739">Sodium transport</keyword>
<keyword id="KW-0812">Transmembrane</keyword>
<keyword id="KW-1133">Transmembrane helix</keyword>
<keyword id="KW-0813">Transport</keyword>
<proteinExistence type="evidence at protein level"/>
<protein>
    <recommendedName>
        <fullName evidence="6">Pickpocket protein 28</fullName>
        <shortName evidence="6 9">PPK28</shortName>
    </recommendedName>
</protein>